<reference key="1">
    <citation type="journal article" date="2007" name="Genome Biol.">
        <title>Comparison of Francisella tularensis genomes reveals evolutionary events associated with the emergence of human pathogenic strains.</title>
        <authorList>
            <person name="Rohmer L."/>
            <person name="Fong C."/>
            <person name="Abmayr S."/>
            <person name="Wasnick M."/>
            <person name="Larson Freeman T.J."/>
            <person name="Radey M."/>
            <person name="Guina T."/>
            <person name="Svensson K."/>
            <person name="Hayden H.S."/>
            <person name="Jacobs M."/>
            <person name="Gallagher L.A."/>
            <person name="Manoil C."/>
            <person name="Ernst R.K."/>
            <person name="Drees B."/>
            <person name="Buckley D."/>
            <person name="Haugen E."/>
            <person name="Bovee D."/>
            <person name="Zhou Y."/>
            <person name="Chang J."/>
            <person name="Levy R."/>
            <person name="Lim R."/>
            <person name="Gillett W."/>
            <person name="Guenthener D."/>
            <person name="Kang A."/>
            <person name="Shaffer S.A."/>
            <person name="Taylor G."/>
            <person name="Chen J."/>
            <person name="Gallis B."/>
            <person name="D'Argenio D.A."/>
            <person name="Forsman M."/>
            <person name="Olson M.V."/>
            <person name="Goodlett D.R."/>
            <person name="Kaul R."/>
            <person name="Miller S.I."/>
            <person name="Brittnacher M.J."/>
        </authorList>
    </citation>
    <scope>NUCLEOTIDE SEQUENCE [LARGE SCALE GENOMIC DNA]</scope>
    <source>
        <strain>U112</strain>
    </source>
</reference>
<feature type="chain" id="PRO_1000069821" description="4-hydroxybenzoate octaprenyltransferase">
    <location>
        <begin position="1"/>
        <end position="284"/>
    </location>
</feature>
<feature type="transmembrane region" description="Helical" evidence="1">
    <location>
        <begin position="19"/>
        <end position="39"/>
    </location>
</feature>
<feature type="transmembrane region" description="Helical" evidence="1">
    <location>
        <begin position="42"/>
        <end position="62"/>
    </location>
</feature>
<feature type="transmembrane region" description="Helical" evidence="1">
    <location>
        <begin position="85"/>
        <end position="105"/>
    </location>
</feature>
<feature type="transmembrane region" description="Helical" evidence="1">
    <location>
        <begin position="107"/>
        <end position="127"/>
    </location>
</feature>
<feature type="transmembrane region" description="Helical" evidence="1">
    <location>
        <begin position="134"/>
        <end position="154"/>
    </location>
</feature>
<feature type="transmembrane region" description="Helical" evidence="1">
    <location>
        <begin position="165"/>
        <end position="185"/>
    </location>
</feature>
<feature type="transmembrane region" description="Helical" evidence="1">
    <location>
        <begin position="211"/>
        <end position="231"/>
    </location>
</feature>
<feature type="transmembrane region" description="Helical" evidence="1">
    <location>
        <begin position="233"/>
        <end position="253"/>
    </location>
</feature>
<feature type="transmembrane region" description="Helical" evidence="1">
    <location>
        <begin position="261"/>
        <end position="281"/>
    </location>
</feature>
<comment type="function">
    <text evidence="1">Catalyzes the prenylation of para-hydroxybenzoate (PHB) with an all-trans polyprenyl group. Mediates the second step in the final reaction sequence of ubiquinone-8 (UQ-8) biosynthesis, which is the condensation of the polyisoprenoid side chain with PHB, generating the first membrane-bound Q intermediate 3-octaprenyl-4-hydroxybenzoate.</text>
</comment>
<comment type="catalytic activity">
    <reaction evidence="1">
        <text>all-trans-octaprenyl diphosphate + 4-hydroxybenzoate = 4-hydroxy-3-(all-trans-octaprenyl)benzoate + diphosphate</text>
        <dbReference type="Rhea" id="RHEA:27782"/>
        <dbReference type="ChEBI" id="CHEBI:1617"/>
        <dbReference type="ChEBI" id="CHEBI:17879"/>
        <dbReference type="ChEBI" id="CHEBI:33019"/>
        <dbReference type="ChEBI" id="CHEBI:57711"/>
        <dbReference type="EC" id="2.5.1.39"/>
    </reaction>
</comment>
<comment type="cofactor">
    <cofactor evidence="1">
        <name>Mg(2+)</name>
        <dbReference type="ChEBI" id="CHEBI:18420"/>
    </cofactor>
</comment>
<comment type="pathway">
    <text evidence="1">Cofactor biosynthesis; ubiquinone biosynthesis.</text>
</comment>
<comment type="subcellular location">
    <subcellularLocation>
        <location evidence="1">Cell inner membrane</location>
        <topology evidence="1">Multi-pass membrane protein</topology>
    </subcellularLocation>
</comment>
<comment type="similarity">
    <text evidence="1">Belongs to the UbiA prenyltransferase family.</text>
</comment>
<proteinExistence type="inferred from homology"/>
<keyword id="KW-0997">Cell inner membrane</keyword>
<keyword id="KW-1003">Cell membrane</keyword>
<keyword id="KW-0460">Magnesium</keyword>
<keyword id="KW-0472">Membrane</keyword>
<keyword id="KW-0808">Transferase</keyword>
<keyword id="KW-0812">Transmembrane</keyword>
<keyword id="KW-1133">Transmembrane helix</keyword>
<keyword id="KW-0831">Ubiquinone biosynthesis</keyword>
<evidence type="ECO:0000255" key="1">
    <source>
        <dbReference type="HAMAP-Rule" id="MF_01635"/>
    </source>
</evidence>
<name>UBIA_FRATN</name>
<protein>
    <recommendedName>
        <fullName evidence="1">4-hydroxybenzoate octaprenyltransferase</fullName>
        <ecNumber evidence="1">2.5.1.39</ecNumber>
    </recommendedName>
    <alternativeName>
        <fullName evidence="1">4-HB polyprenyltransferase</fullName>
    </alternativeName>
</protein>
<organism>
    <name type="scientific">Francisella tularensis subsp. novicida (strain U112)</name>
    <dbReference type="NCBI Taxonomy" id="401614"/>
    <lineage>
        <taxon>Bacteria</taxon>
        <taxon>Pseudomonadati</taxon>
        <taxon>Pseudomonadota</taxon>
        <taxon>Gammaproteobacteria</taxon>
        <taxon>Thiotrichales</taxon>
        <taxon>Francisellaceae</taxon>
        <taxon>Francisella</taxon>
    </lineage>
</organism>
<dbReference type="EC" id="2.5.1.39" evidence="1"/>
<dbReference type="EMBL" id="CP000439">
    <property type="protein sequence ID" value="ABK89288.1"/>
    <property type="molecule type" value="Genomic_DNA"/>
</dbReference>
<dbReference type="RefSeq" id="WP_003033040.1">
    <property type="nucleotide sequence ID" value="NZ_CP009633.1"/>
</dbReference>
<dbReference type="SMR" id="A0Q4X3"/>
<dbReference type="KEGG" id="ftn:FTN_0385"/>
<dbReference type="KEGG" id="ftx:AW25_1649"/>
<dbReference type="BioCyc" id="FTUL401614:G1G75-402-MONOMER"/>
<dbReference type="UniPathway" id="UPA00232"/>
<dbReference type="Proteomes" id="UP000000762">
    <property type="component" value="Chromosome"/>
</dbReference>
<dbReference type="GO" id="GO:0005886">
    <property type="term" value="C:plasma membrane"/>
    <property type="evidence" value="ECO:0007669"/>
    <property type="project" value="UniProtKB-SubCell"/>
</dbReference>
<dbReference type="GO" id="GO:0008412">
    <property type="term" value="F:4-hydroxybenzoate polyprenyltransferase activity"/>
    <property type="evidence" value="ECO:0007669"/>
    <property type="project" value="UniProtKB-UniRule"/>
</dbReference>
<dbReference type="GO" id="GO:0006744">
    <property type="term" value="P:ubiquinone biosynthetic process"/>
    <property type="evidence" value="ECO:0007669"/>
    <property type="project" value="UniProtKB-UniRule"/>
</dbReference>
<dbReference type="CDD" id="cd13959">
    <property type="entry name" value="PT_UbiA_COQ2"/>
    <property type="match status" value="1"/>
</dbReference>
<dbReference type="FunFam" id="1.10.357.140:FF:000008">
    <property type="entry name" value="4-hydroxybenzoate octaprenyltransferase"/>
    <property type="match status" value="1"/>
</dbReference>
<dbReference type="FunFam" id="1.20.120.1780:FF:000001">
    <property type="entry name" value="4-hydroxybenzoate octaprenyltransferase"/>
    <property type="match status" value="1"/>
</dbReference>
<dbReference type="Gene3D" id="1.10.357.140">
    <property type="entry name" value="UbiA prenyltransferase"/>
    <property type="match status" value="1"/>
</dbReference>
<dbReference type="Gene3D" id="1.20.120.1780">
    <property type="entry name" value="UbiA prenyltransferase"/>
    <property type="match status" value="1"/>
</dbReference>
<dbReference type="HAMAP" id="MF_01635">
    <property type="entry name" value="UbiA"/>
    <property type="match status" value="1"/>
</dbReference>
<dbReference type="InterPro" id="IPR006370">
    <property type="entry name" value="HB_polyprenyltransferase-like"/>
</dbReference>
<dbReference type="InterPro" id="IPR039653">
    <property type="entry name" value="Prenyltransferase"/>
</dbReference>
<dbReference type="InterPro" id="IPR000537">
    <property type="entry name" value="UbiA_prenyltransferase"/>
</dbReference>
<dbReference type="InterPro" id="IPR030470">
    <property type="entry name" value="UbiA_prenylTrfase_CS"/>
</dbReference>
<dbReference type="InterPro" id="IPR044878">
    <property type="entry name" value="UbiA_sf"/>
</dbReference>
<dbReference type="NCBIfam" id="TIGR01474">
    <property type="entry name" value="ubiA_proteo"/>
    <property type="match status" value="1"/>
</dbReference>
<dbReference type="PANTHER" id="PTHR11048:SF28">
    <property type="entry name" value="4-HYDROXYBENZOATE POLYPRENYLTRANSFERASE, MITOCHONDRIAL"/>
    <property type="match status" value="1"/>
</dbReference>
<dbReference type="PANTHER" id="PTHR11048">
    <property type="entry name" value="PRENYLTRANSFERASES"/>
    <property type="match status" value="1"/>
</dbReference>
<dbReference type="Pfam" id="PF01040">
    <property type="entry name" value="UbiA"/>
    <property type="match status" value="1"/>
</dbReference>
<dbReference type="PROSITE" id="PS00943">
    <property type="entry name" value="UBIA"/>
    <property type="match status" value="1"/>
</dbReference>
<gene>
    <name evidence="1" type="primary">ubiA</name>
    <name type="ordered locus">FTN_0385</name>
</gene>
<sequence>MNKQQLKAYFMLMRLHRPIPILLILWPTLTALVLASHGLPDISYLVIFTIGVVVMRTVGCIINDIADVDFDKHVARTNTRPLTSGQLSIKNAIWLCISLTLVAFICVLFLNLYTILLSFVALFLAILYPFCKRFFAIPQLILGLAFNFGIFMAFSAIQNQIPVEAWIFYLATICWTIAYDTIYALADREFDLEIGIKSSAVLFGNKVFRYILLFNFLSLLLLIILGIYCDFNSFFYLGVVICSLFFVRNYFLYKKLGITNCINAFSANHWIGLIIFIMAVIQYI</sequence>
<accession>A0Q4X3</accession>